<organism>
    <name type="scientific">Mycoplasma pneumoniae (strain ATCC 29342 / M129 / Subtype 1)</name>
    <name type="common">Mycoplasmoides pneumoniae</name>
    <dbReference type="NCBI Taxonomy" id="272634"/>
    <lineage>
        <taxon>Bacteria</taxon>
        <taxon>Bacillati</taxon>
        <taxon>Mycoplasmatota</taxon>
        <taxon>Mycoplasmoidales</taxon>
        <taxon>Mycoplasmoidaceae</taxon>
        <taxon>Mycoplasmoides</taxon>
    </lineage>
</organism>
<gene>
    <name type="ordered locus">MPN_435</name>
    <name type="ORF">A05_orf395</name>
    <name type="ORF">MP406</name>
</gene>
<evidence type="ECO:0000255" key="1"/>
<evidence type="ECO:0000305" key="2"/>
<keyword id="KW-1003">Cell membrane</keyword>
<keyword id="KW-0472">Membrane</keyword>
<keyword id="KW-1185">Reference proteome</keyword>
<keyword id="KW-0812">Transmembrane</keyword>
<keyword id="KW-1133">Transmembrane helix</keyword>
<dbReference type="EMBL" id="U00089">
    <property type="protein sequence ID" value="AAB96054.1"/>
    <property type="molecule type" value="Genomic_DNA"/>
</dbReference>
<dbReference type="PIR" id="S73732">
    <property type="entry name" value="S73732"/>
</dbReference>
<dbReference type="RefSeq" id="NP_110123.1">
    <property type="nucleotide sequence ID" value="NC_000912.1"/>
</dbReference>
<dbReference type="RefSeq" id="WP_010874791.1">
    <property type="nucleotide sequence ID" value="NZ_OU342337.1"/>
</dbReference>
<dbReference type="STRING" id="272634.MPN_435"/>
<dbReference type="EnsemblBacteria" id="AAB96054">
    <property type="protein sequence ID" value="AAB96054"/>
    <property type="gene ID" value="MPN_435"/>
</dbReference>
<dbReference type="KEGG" id="mpn:MPN_435"/>
<dbReference type="PATRIC" id="fig|272634.6.peg.470"/>
<dbReference type="HOGENOM" id="CLU_629808_0_0_14"/>
<dbReference type="OrthoDB" id="394179at2"/>
<dbReference type="BioCyc" id="MPNE272634:G1GJ3-703-MONOMER"/>
<dbReference type="Proteomes" id="UP000000808">
    <property type="component" value="Chromosome"/>
</dbReference>
<dbReference type="GO" id="GO:0005886">
    <property type="term" value="C:plasma membrane"/>
    <property type="evidence" value="ECO:0007669"/>
    <property type="project" value="UniProtKB-SubCell"/>
</dbReference>
<dbReference type="InterPro" id="IPR022791">
    <property type="entry name" value="L-PG_synthase/AglD"/>
</dbReference>
<dbReference type="Pfam" id="PF03706">
    <property type="entry name" value="LPG_synthase_TM"/>
    <property type="match status" value="1"/>
</dbReference>
<accession>P75343</accession>
<reference key="1">
    <citation type="journal article" date="1996" name="Nucleic Acids Res.">
        <title>Complete sequence analysis of the genome of the bacterium Mycoplasma pneumoniae.</title>
        <authorList>
            <person name="Himmelreich R."/>
            <person name="Hilbert H."/>
            <person name="Plagens H."/>
            <person name="Pirkl E."/>
            <person name="Li B.-C."/>
            <person name="Herrmann R."/>
        </authorList>
    </citation>
    <scope>NUCLEOTIDE SEQUENCE [LARGE SCALE GENOMIC DNA]</scope>
    <source>
        <strain>ATCC 29342 / M129 / Subtype 1</strain>
    </source>
</reference>
<feature type="chain" id="PRO_0000210525" description="Uncharacterized protein MG306 homolog">
    <location>
        <begin position="1"/>
        <end position="395"/>
    </location>
</feature>
<feature type="transmembrane region" description="Helical" evidence="1">
    <location>
        <begin position="15"/>
        <end position="35"/>
    </location>
</feature>
<feature type="transmembrane region" description="Helical" evidence="1">
    <location>
        <begin position="56"/>
        <end position="76"/>
    </location>
</feature>
<feature type="transmembrane region" description="Helical" evidence="1">
    <location>
        <begin position="86"/>
        <end position="106"/>
    </location>
</feature>
<feature type="transmembrane region" description="Helical" evidence="1">
    <location>
        <begin position="131"/>
        <end position="151"/>
    </location>
</feature>
<feature type="transmembrane region" description="Helical" evidence="1">
    <location>
        <begin position="175"/>
        <end position="195"/>
    </location>
</feature>
<feature type="transmembrane region" description="Helical" evidence="1">
    <location>
        <begin position="254"/>
        <end position="274"/>
    </location>
</feature>
<feature type="transmembrane region" description="Helical" evidence="1">
    <location>
        <begin position="298"/>
        <end position="318"/>
    </location>
</feature>
<feature type="transmembrane region" description="Helical" evidence="1">
    <location>
        <begin position="348"/>
        <end position="368"/>
    </location>
</feature>
<sequence length="395" mass="45633">MSTPKSASFFTRKNILAFSFFIAFLVVVSVLVTVFFLDIKTGDVKTIINTINRTNWPWILLIVLGIVVTLAWNIIINWWVARRFCFHAPWWEWVLFACVVQFFQIVTPLSLGQDPFRLYWFIKKGMKKQTAVLLVTSTGAFWNLAQALITWPSFFVLSQNYALLEQNHEGFVSYWFSFAGMIFDVVVAILFIFIAYSKRMHVLIYSGVNQFRKWIKRPYLTKEQIYQRFIDKAEFNKLYGLEIKRLGLTIFKLLANILIAVVGYFSVFAVFAIVKKENATNNVIDQYSTADIFNITNIAITASNFIPVPSGEGATQFVMTSFLNAFKSAVGIESQVKQGVFLWRFLSVYIPAILFSLCFIGWVVQVVIEFKHPKPVLPTVNLINHHFWNNKKLHN</sequence>
<protein>
    <recommendedName>
        <fullName>Uncharacterized protein MG306 homolog</fullName>
    </recommendedName>
</protein>
<proteinExistence type="predicted"/>
<name>Y435_MYCPN</name>
<comment type="subcellular location">
    <subcellularLocation>
        <location evidence="2">Cell membrane</location>
        <topology evidence="2">Multi-pass membrane protein</topology>
    </subcellularLocation>
</comment>